<proteinExistence type="inferred from homology"/>
<dbReference type="EMBL" id="CP001614">
    <property type="protein sequence ID" value="ACR12239.1"/>
    <property type="molecule type" value="Genomic_DNA"/>
</dbReference>
<dbReference type="RefSeq" id="WP_015818351.1">
    <property type="nucleotide sequence ID" value="NC_012997.1"/>
</dbReference>
<dbReference type="SMR" id="C5BN73"/>
<dbReference type="STRING" id="377629.TERTU_0577"/>
<dbReference type="KEGG" id="ttu:TERTU_0577"/>
<dbReference type="eggNOG" id="COG1489">
    <property type="taxonomic scope" value="Bacteria"/>
</dbReference>
<dbReference type="HOGENOM" id="CLU_052299_2_0_6"/>
<dbReference type="OrthoDB" id="9802365at2"/>
<dbReference type="Proteomes" id="UP000009080">
    <property type="component" value="Chromosome"/>
</dbReference>
<dbReference type="GO" id="GO:0003677">
    <property type="term" value="F:DNA binding"/>
    <property type="evidence" value="ECO:0007669"/>
    <property type="project" value="InterPro"/>
</dbReference>
<dbReference type="CDD" id="cd22359">
    <property type="entry name" value="SfsA-like_bacterial"/>
    <property type="match status" value="1"/>
</dbReference>
<dbReference type="FunFam" id="2.40.50.580:FF:000001">
    <property type="entry name" value="Sugar fermentation stimulation protein A"/>
    <property type="match status" value="1"/>
</dbReference>
<dbReference type="Gene3D" id="2.40.50.580">
    <property type="match status" value="1"/>
</dbReference>
<dbReference type="Gene3D" id="3.40.1350.60">
    <property type="match status" value="1"/>
</dbReference>
<dbReference type="HAMAP" id="MF_00095">
    <property type="entry name" value="SfsA"/>
    <property type="match status" value="1"/>
</dbReference>
<dbReference type="InterPro" id="IPR005224">
    <property type="entry name" value="SfsA"/>
</dbReference>
<dbReference type="InterPro" id="IPR040452">
    <property type="entry name" value="SfsA_C"/>
</dbReference>
<dbReference type="InterPro" id="IPR041465">
    <property type="entry name" value="SfsA_N"/>
</dbReference>
<dbReference type="NCBIfam" id="TIGR00230">
    <property type="entry name" value="sfsA"/>
    <property type="match status" value="1"/>
</dbReference>
<dbReference type="PANTHER" id="PTHR30545">
    <property type="entry name" value="SUGAR FERMENTATION STIMULATION PROTEIN A"/>
    <property type="match status" value="1"/>
</dbReference>
<dbReference type="PANTHER" id="PTHR30545:SF2">
    <property type="entry name" value="SUGAR FERMENTATION STIMULATION PROTEIN A"/>
    <property type="match status" value="1"/>
</dbReference>
<dbReference type="Pfam" id="PF03749">
    <property type="entry name" value="SfsA"/>
    <property type="match status" value="1"/>
</dbReference>
<dbReference type="Pfam" id="PF17746">
    <property type="entry name" value="SfsA_N"/>
    <property type="match status" value="1"/>
</dbReference>
<comment type="similarity">
    <text evidence="1">Belongs to the SfsA family.</text>
</comment>
<feature type="chain" id="PRO_1000202730" description="Sugar fermentation stimulation protein homolog">
    <location>
        <begin position="1"/>
        <end position="233"/>
    </location>
</feature>
<gene>
    <name evidence="1" type="primary">sfsA</name>
    <name type="ordered locus">TERTU_0577</name>
</gene>
<protein>
    <recommendedName>
        <fullName evidence="1">Sugar fermentation stimulation protein homolog</fullName>
    </recommendedName>
</protein>
<accession>C5BN73</accession>
<evidence type="ECO:0000255" key="1">
    <source>
        <dbReference type="HAMAP-Rule" id="MF_00095"/>
    </source>
</evidence>
<sequence length="233" mass="25493">MLFEPPLISATLVRRYKRFLADVVLASGEEITVHCPNTGSMKNCVVPHSPCYLSDSNNPKRKYRYTLELVTTPDGDLAGVNTGRANALVEEAIRAGVVPELAGYQIQREQKYGEEGSRIDLLLSRGEERCFVEVKNVTLAEPGGQGLFPDAVSVRGAKHLRELMYVRAQGHRAVLFFCVQHTGVNLVSPADDIDAVYGQLLREAAGAGVEIFAVRATLGSCEIKLRELLPVVL</sequence>
<keyword id="KW-1185">Reference proteome</keyword>
<organism>
    <name type="scientific">Teredinibacter turnerae (strain ATCC 39867 / T7901)</name>
    <dbReference type="NCBI Taxonomy" id="377629"/>
    <lineage>
        <taxon>Bacteria</taxon>
        <taxon>Pseudomonadati</taxon>
        <taxon>Pseudomonadota</taxon>
        <taxon>Gammaproteobacteria</taxon>
        <taxon>Cellvibrionales</taxon>
        <taxon>Cellvibrionaceae</taxon>
        <taxon>Teredinibacter</taxon>
    </lineage>
</organism>
<name>SFSA_TERTT</name>
<reference key="1">
    <citation type="journal article" date="2009" name="PLoS ONE">
        <title>The complete genome of Teredinibacter turnerae T7901: an intracellular endosymbiont of marine wood-boring bivalves (shipworms).</title>
        <authorList>
            <person name="Yang J.C."/>
            <person name="Madupu R."/>
            <person name="Durkin A.S."/>
            <person name="Ekborg N.A."/>
            <person name="Pedamallu C.S."/>
            <person name="Hostetler J.B."/>
            <person name="Radune D."/>
            <person name="Toms B.S."/>
            <person name="Henrissat B."/>
            <person name="Coutinho P.M."/>
            <person name="Schwarz S."/>
            <person name="Field L."/>
            <person name="Trindade-Silva A.E."/>
            <person name="Soares C.A.G."/>
            <person name="Elshahawi S."/>
            <person name="Hanora A."/>
            <person name="Schmidt E.W."/>
            <person name="Haygood M.G."/>
            <person name="Posfai J."/>
            <person name="Benner J."/>
            <person name="Madinger C."/>
            <person name="Nove J."/>
            <person name="Anton B."/>
            <person name="Chaudhary K."/>
            <person name="Foster J."/>
            <person name="Holman A."/>
            <person name="Kumar S."/>
            <person name="Lessard P.A."/>
            <person name="Luyten Y.A."/>
            <person name="Slatko B."/>
            <person name="Wood N."/>
            <person name="Wu B."/>
            <person name="Teplitski M."/>
            <person name="Mougous J.D."/>
            <person name="Ward N."/>
            <person name="Eisen J.A."/>
            <person name="Badger J.H."/>
            <person name="Distel D.L."/>
        </authorList>
    </citation>
    <scope>NUCLEOTIDE SEQUENCE [LARGE SCALE GENOMIC DNA]</scope>
    <source>
        <strain>ATCC 39867 / T7901</strain>
    </source>
</reference>